<keyword id="KW-0067">ATP-binding</keyword>
<keyword id="KW-0319">Glycerol metabolism</keyword>
<keyword id="KW-0418">Kinase</keyword>
<keyword id="KW-0547">Nucleotide-binding</keyword>
<keyword id="KW-0808">Transferase</keyword>
<sequence>MTEQKYIVALDQGTTSSRAVVLDHDANIVSVSQREFTQIYPQAGWVEHDPMEIYATQSSTLVEALGKKGIRSDQVAAIGITNQRETTIVWNKETGKPVYNAIVWQCRRTADICEDLKARGLESYIRENTGLVLDPYFSGTKVKWILDNVEGAREDAEAGKLLFGTVDTWLVWKMTQGRVHVTDYTNASRTMLFNINDLCWDSKLLEEMGIPASMMPEVKRSSEIYGQTNIGGKGGTRIPISGIAGDQQAALYGQMCVEAGQAKNTYGTGCFLLMNTGQEKVTSRNGLLTTLACGPKGEPAYALEGAVFMGGASIQWLRDELKLISDAHDSEYFATKVDTSNGVYVVPAFTGLGAPYWDAYARGTIVGLTRGVNSNHIIRATLEGIAYQTRDVLDAMQADSGIKLSALRVDGGAVANNFLMQFQSDVLDTEVHRPKVTEVTALGAAYLAGLAVGYWNSIDELQGKAEIDRSFLPHQDEEKRSRRYKGWKRAVKCAQTWSELRDLED</sequence>
<dbReference type="EC" id="2.7.1.30" evidence="1"/>
<dbReference type="EMBL" id="AE016795">
    <property type="protein sequence ID" value="AAO10196.1"/>
    <property type="molecule type" value="Genomic_DNA"/>
</dbReference>
<dbReference type="RefSeq" id="WP_011079696.1">
    <property type="nucleotide sequence ID" value="NC_004459.3"/>
</dbReference>
<dbReference type="SMR" id="Q8DBM6"/>
<dbReference type="GeneID" id="93896026"/>
<dbReference type="KEGG" id="vvu:VV1_1787"/>
<dbReference type="HOGENOM" id="CLU_009281_2_3_6"/>
<dbReference type="UniPathway" id="UPA00618">
    <property type="reaction ID" value="UER00672"/>
</dbReference>
<dbReference type="Proteomes" id="UP000002275">
    <property type="component" value="Chromosome 1"/>
</dbReference>
<dbReference type="GO" id="GO:0005829">
    <property type="term" value="C:cytosol"/>
    <property type="evidence" value="ECO:0007669"/>
    <property type="project" value="TreeGrafter"/>
</dbReference>
<dbReference type="GO" id="GO:0005524">
    <property type="term" value="F:ATP binding"/>
    <property type="evidence" value="ECO:0007669"/>
    <property type="project" value="UniProtKB-UniRule"/>
</dbReference>
<dbReference type="GO" id="GO:0004370">
    <property type="term" value="F:glycerol kinase activity"/>
    <property type="evidence" value="ECO:0000250"/>
    <property type="project" value="UniProtKB"/>
</dbReference>
<dbReference type="GO" id="GO:0019563">
    <property type="term" value="P:glycerol catabolic process"/>
    <property type="evidence" value="ECO:0007669"/>
    <property type="project" value="UniProtKB-UniRule"/>
</dbReference>
<dbReference type="GO" id="GO:0006071">
    <property type="term" value="P:glycerol metabolic process"/>
    <property type="evidence" value="ECO:0000250"/>
    <property type="project" value="UniProtKB"/>
</dbReference>
<dbReference type="GO" id="GO:0006072">
    <property type="term" value="P:glycerol-3-phosphate metabolic process"/>
    <property type="evidence" value="ECO:0007669"/>
    <property type="project" value="InterPro"/>
</dbReference>
<dbReference type="CDD" id="cd07786">
    <property type="entry name" value="FGGY_EcGK_like"/>
    <property type="match status" value="1"/>
</dbReference>
<dbReference type="FunFam" id="3.30.420.40:FF:000007">
    <property type="entry name" value="Glycerol kinase"/>
    <property type="match status" value="1"/>
</dbReference>
<dbReference type="FunFam" id="3.30.420.40:FF:000008">
    <property type="entry name" value="Glycerol kinase"/>
    <property type="match status" value="1"/>
</dbReference>
<dbReference type="Gene3D" id="3.30.420.40">
    <property type="match status" value="2"/>
</dbReference>
<dbReference type="HAMAP" id="MF_00186">
    <property type="entry name" value="Glycerol_kin"/>
    <property type="match status" value="1"/>
</dbReference>
<dbReference type="InterPro" id="IPR043129">
    <property type="entry name" value="ATPase_NBD"/>
</dbReference>
<dbReference type="InterPro" id="IPR000577">
    <property type="entry name" value="Carb_kinase_FGGY"/>
</dbReference>
<dbReference type="InterPro" id="IPR018483">
    <property type="entry name" value="Carb_kinase_FGGY_CS"/>
</dbReference>
<dbReference type="InterPro" id="IPR018485">
    <property type="entry name" value="FGGY_C"/>
</dbReference>
<dbReference type="InterPro" id="IPR018484">
    <property type="entry name" value="FGGY_N"/>
</dbReference>
<dbReference type="InterPro" id="IPR005999">
    <property type="entry name" value="Glycerol_kin"/>
</dbReference>
<dbReference type="NCBIfam" id="TIGR01311">
    <property type="entry name" value="glycerol_kin"/>
    <property type="match status" value="1"/>
</dbReference>
<dbReference type="NCBIfam" id="NF000756">
    <property type="entry name" value="PRK00047.1"/>
    <property type="match status" value="1"/>
</dbReference>
<dbReference type="PANTHER" id="PTHR10196:SF69">
    <property type="entry name" value="GLYCEROL KINASE"/>
    <property type="match status" value="1"/>
</dbReference>
<dbReference type="PANTHER" id="PTHR10196">
    <property type="entry name" value="SUGAR KINASE"/>
    <property type="match status" value="1"/>
</dbReference>
<dbReference type="Pfam" id="PF02782">
    <property type="entry name" value="FGGY_C"/>
    <property type="match status" value="1"/>
</dbReference>
<dbReference type="Pfam" id="PF00370">
    <property type="entry name" value="FGGY_N"/>
    <property type="match status" value="1"/>
</dbReference>
<dbReference type="PIRSF" id="PIRSF000538">
    <property type="entry name" value="GlpK"/>
    <property type="match status" value="1"/>
</dbReference>
<dbReference type="SUPFAM" id="SSF53067">
    <property type="entry name" value="Actin-like ATPase domain"/>
    <property type="match status" value="2"/>
</dbReference>
<dbReference type="PROSITE" id="PS00933">
    <property type="entry name" value="FGGY_KINASES_1"/>
    <property type="match status" value="1"/>
</dbReference>
<dbReference type="PROSITE" id="PS00445">
    <property type="entry name" value="FGGY_KINASES_2"/>
    <property type="match status" value="1"/>
</dbReference>
<protein>
    <recommendedName>
        <fullName evidence="1">Glycerol kinase</fullName>
        <ecNumber evidence="1">2.7.1.30</ecNumber>
    </recommendedName>
    <alternativeName>
        <fullName evidence="1">ATP:glycerol 3-phosphotransferase</fullName>
    </alternativeName>
    <alternativeName>
        <fullName evidence="1">Glycerokinase</fullName>
        <shortName evidence="1">GK</shortName>
    </alternativeName>
</protein>
<gene>
    <name evidence="1" type="primary">glpK</name>
    <name type="ordered locus">VV1_1787</name>
</gene>
<feature type="chain" id="PRO_0000059520" description="Glycerol kinase">
    <location>
        <begin position="1"/>
        <end position="505"/>
    </location>
</feature>
<feature type="binding site" evidence="1">
    <location>
        <position position="14"/>
    </location>
    <ligand>
        <name>ADP</name>
        <dbReference type="ChEBI" id="CHEBI:456216"/>
    </ligand>
</feature>
<feature type="binding site" evidence="1">
    <location>
        <position position="14"/>
    </location>
    <ligand>
        <name>ATP</name>
        <dbReference type="ChEBI" id="CHEBI:30616"/>
    </ligand>
</feature>
<feature type="binding site" evidence="1">
    <location>
        <position position="14"/>
    </location>
    <ligand>
        <name>sn-glycerol 3-phosphate</name>
        <dbReference type="ChEBI" id="CHEBI:57597"/>
    </ligand>
</feature>
<feature type="binding site" evidence="1">
    <location>
        <position position="15"/>
    </location>
    <ligand>
        <name>ATP</name>
        <dbReference type="ChEBI" id="CHEBI:30616"/>
    </ligand>
</feature>
<feature type="binding site" evidence="1">
    <location>
        <position position="16"/>
    </location>
    <ligand>
        <name>ATP</name>
        <dbReference type="ChEBI" id="CHEBI:30616"/>
    </ligand>
</feature>
<feature type="binding site" evidence="1">
    <location>
        <position position="18"/>
    </location>
    <ligand>
        <name>ADP</name>
        <dbReference type="ChEBI" id="CHEBI:456216"/>
    </ligand>
</feature>
<feature type="binding site" evidence="1">
    <location>
        <position position="84"/>
    </location>
    <ligand>
        <name>glycerol</name>
        <dbReference type="ChEBI" id="CHEBI:17754"/>
    </ligand>
</feature>
<feature type="binding site" evidence="1">
    <location>
        <position position="84"/>
    </location>
    <ligand>
        <name>sn-glycerol 3-phosphate</name>
        <dbReference type="ChEBI" id="CHEBI:57597"/>
    </ligand>
</feature>
<feature type="binding site" evidence="1">
    <location>
        <position position="85"/>
    </location>
    <ligand>
        <name>glycerol</name>
        <dbReference type="ChEBI" id="CHEBI:17754"/>
    </ligand>
</feature>
<feature type="binding site" evidence="1">
    <location>
        <position position="85"/>
    </location>
    <ligand>
        <name>sn-glycerol 3-phosphate</name>
        <dbReference type="ChEBI" id="CHEBI:57597"/>
    </ligand>
</feature>
<feature type="binding site" evidence="1">
    <location>
        <position position="136"/>
    </location>
    <ligand>
        <name>glycerol</name>
        <dbReference type="ChEBI" id="CHEBI:17754"/>
    </ligand>
</feature>
<feature type="binding site" evidence="1">
    <location>
        <position position="136"/>
    </location>
    <ligand>
        <name>sn-glycerol 3-phosphate</name>
        <dbReference type="ChEBI" id="CHEBI:57597"/>
    </ligand>
</feature>
<feature type="binding site" evidence="1">
    <location>
        <position position="246"/>
    </location>
    <ligand>
        <name>glycerol</name>
        <dbReference type="ChEBI" id="CHEBI:17754"/>
    </ligand>
</feature>
<feature type="binding site" evidence="1">
    <location>
        <position position="246"/>
    </location>
    <ligand>
        <name>sn-glycerol 3-phosphate</name>
        <dbReference type="ChEBI" id="CHEBI:57597"/>
    </ligand>
</feature>
<feature type="binding site" evidence="1">
    <location>
        <position position="247"/>
    </location>
    <ligand>
        <name>glycerol</name>
        <dbReference type="ChEBI" id="CHEBI:17754"/>
    </ligand>
</feature>
<feature type="binding site" evidence="1">
    <location>
        <position position="268"/>
    </location>
    <ligand>
        <name>ADP</name>
        <dbReference type="ChEBI" id="CHEBI:456216"/>
    </ligand>
</feature>
<feature type="binding site" evidence="1">
    <location>
        <position position="268"/>
    </location>
    <ligand>
        <name>ATP</name>
        <dbReference type="ChEBI" id="CHEBI:30616"/>
    </ligand>
</feature>
<feature type="binding site" evidence="1">
    <location>
        <position position="311"/>
    </location>
    <ligand>
        <name>ADP</name>
        <dbReference type="ChEBI" id="CHEBI:456216"/>
    </ligand>
</feature>
<feature type="binding site" evidence="1">
    <location>
        <position position="311"/>
    </location>
    <ligand>
        <name>ATP</name>
        <dbReference type="ChEBI" id="CHEBI:30616"/>
    </ligand>
</feature>
<feature type="binding site" evidence="1">
    <location>
        <position position="315"/>
    </location>
    <ligand>
        <name>ATP</name>
        <dbReference type="ChEBI" id="CHEBI:30616"/>
    </ligand>
</feature>
<feature type="binding site" evidence="1">
    <location>
        <position position="412"/>
    </location>
    <ligand>
        <name>ADP</name>
        <dbReference type="ChEBI" id="CHEBI:456216"/>
    </ligand>
</feature>
<feature type="binding site" evidence="1">
    <location>
        <position position="412"/>
    </location>
    <ligand>
        <name>ATP</name>
        <dbReference type="ChEBI" id="CHEBI:30616"/>
    </ligand>
</feature>
<feature type="binding site" evidence="1">
    <location>
        <position position="416"/>
    </location>
    <ligand>
        <name>ADP</name>
        <dbReference type="ChEBI" id="CHEBI:456216"/>
    </ligand>
</feature>
<organism>
    <name type="scientific">Vibrio vulnificus (strain CMCP6)</name>
    <dbReference type="NCBI Taxonomy" id="216895"/>
    <lineage>
        <taxon>Bacteria</taxon>
        <taxon>Pseudomonadati</taxon>
        <taxon>Pseudomonadota</taxon>
        <taxon>Gammaproteobacteria</taxon>
        <taxon>Vibrionales</taxon>
        <taxon>Vibrionaceae</taxon>
        <taxon>Vibrio</taxon>
    </lineage>
</organism>
<name>GLPK_VIBVU</name>
<accession>Q8DBM6</accession>
<evidence type="ECO:0000255" key="1">
    <source>
        <dbReference type="HAMAP-Rule" id="MF_00186"/>
    </source>
</evidence>
<proteinExistence type="inferred from homology"/>
<comment type="function">
    <text evidence="1">Key enzyme in the regulation of glycerol uptake and metabolism. Catalyzes the phosphorylation of glycerol to yield sn-glycerol 3-phosphate.</text>
</comment>
<comment type="catalytic activity">
    <reaction evidence="1">
        <text>glycerol + ATP = sn-glycerol 3-phosphate + ADP + H(+)</text>
        <dbReference type="Rhea" id="RHEA:21644"/>
        <dbReference type="ChEBI" id="CHEBI:15378"/>
        <dbReference type="ChEBI" id="CHEBI:17754"/>
        <dbReference type="ChEBI" id="CHEBI:30616"/>
        <dbReference type="ChEBI" id="CHEBI:57597"/>
        <dbReference type="ChEBI" id="CHEBI:456216"/>
        <dbReference type="EC" id="2.7.1.30"/>
    </reaction>
</comment>
<comment type="activity regulation">
    <text evidence="1">Inhibited by fructose 1,6-bisphosphate (FBP).</text>
</comment>
<comment type="pathway">
    <text evidence="1">Polyol metabolism; glycerol degradation via glycerol kinase pathway; sn-glycerol 3-phosphate from glycerol: step 1/1.</text>
</comment>
<comment type="similarity">
    <text evidence="1">Belongs to the FGGY kinase family.</text>
</comment>
<reference key="1">
    <citation type="submission" date="2002-12" db="EMBL/GenBank/DDBJ databases">
        <title>Complete genome sequence of Vibrio vulnificus CMCP6.</title>
        <authorList>
            <person name="Rhee J.H."/>
            <person name="Kim S.Y."/>
            <person name="Chung S.S."/>
            <person name="Kim J.J."/>
            <person name="Moon Y.H."/>
            <person name="Jeong H."/>
            <person name="Choy H.E."/>
        </authorList>
    </citation>
    <scope>NUCLEOTIDE SEQUENCE [LARGE SCALE GENOMIC DNA]</scope>
    <source>
        <strain>CMCP6</strain>
    </source>
</reference>